<reference key="1">
    <citation type="journal article" date="2003" name="Genome Res.">
        <title>Comparative genome analysis of Vibrio vulnificus, a marine pathogen.</title>
        <authorList>
            <person name="Chen C.-Y."/>
            <person name="Wu K.-M."/>
            <person name="Chang Y.-C."/>
            <person name="Chang C.-H."/>
            <person name="Tsai H.-C."/>
            <person name="Liao T.-L."/>
            <person name="Liu Y.-M."/>
            <person name="Chen H.-J."/>
            <person name="Shen A.B.-T."/>
            <person name="Li J.-C."/>
            <person name="Su T.-L."/>
            <person name="Shao C.-P."/>
            <person name="Lee C.-T."/>
            <person name="Hor L.-I."/>
            <person name="Tsai S.-F."/>
        </authorList>
    </citation>
    <scope>NUCLEOTIDE SEQUENCE [LARGE SCALE GENOMIC DNA]</scope>
    <source>
        <strain>YJ016</strain>
    </source>
</reference>
<accession>Q7MIE7</accession>
<keyword id="KW-0687">Ribonucleoprotein</keyword>
<keyword id="KW-0689">Ribosomal protein</keyword>
<comment type="subunit">
    <text evidence="1">Part of the 50S ribosomal subunit.</text>
</comment>
<comment type="similarity">
    <text evidence="1">Belongs to the bacterial ribosomal protein bL31 family. Type B subfamily.</text>
</comment>
<organism>
    <name type="scientific">Vibrio vulnificus (strain YJ016)</name>
    <dbReference type="NCBI Taxonomy" id="196600"/>
    <lineage>
        <taxon>Bacteria</taxon>
        <taxon>Pseudomonadati</taxon>
        <taxon>Pseudomonadota</taxon>
        <taxon>Gammaproteobacteria</taxon>
        <taxon>Vibrionales</taxon>
        <taxon>Vibrionaceae</taxon>
        <taxon>Vibrio</taxon>
    </lineage>
</organism>
<gene>
    <name evidence="1" type="primary">rpmE2</name>
    <name type="ordered locus">VV2570</name>
</gene>
<protein>
    <recommendedName>
        <fullName evidence="1">Large ribosomal subunit protein bL31B</fullName>
    </recommendedName>
    <alternativeName>
        <fullName evidence="2">50S ribosomal protein L31 type B</fullName>
    </alternativeName>
</protein>
<dbReference type="EMBL" id="BA000037">
    <property type="protein sequence ID" value="BAC95334.1"/>
    <property type="molecule type" value="Genomic_DNA"/>
</dbReference>
<dbReference type="RefSeq" id="WP_011150972.1">
    <property type="nucleotide sequence ID" value="NC_005139.1"/>
</dbReference>
<dbReference type="SMR" id="Q7MIE7"/>
<dbReference type="STRING" id="672.VV93_v1c22880"/>
<dbReference type="KEGG" id="vvy:VV2570"/>
<dbReference type="eggNOG" id="COG0254">
    <property type="taxonomic scope" value="Bacteria"/>
</dbReference>
<dbReference type="HOGENOM" id="CLU_114306_2_2_6"/>
<dbReference type="Proteomes" id="UP000002675">
    <property type="component" value="Chromosome I"/>
</dbReference>
<dbReference type="GO" id="GO:1990904">
    <property type="term" value="C:ribonucleoprotein complex"/>
    <property type="evidence" value="ECO:0007669"/>
    <property type="project" value="UniProtKB-KW"/>
</dbReference>
<dbReference type="GO" id="GO:0005840">
    <property type="term" value="C:ribosome"/>
    <property type="evidence" value="ECO:0007669"/>
    <property type="project" value="UniProtKB-KW"/>
</dbReference>
<dbReference type="GO" id="GO:0003735">
    <property type="term" value="F:structural constituent of ribosome"/>
    <property type="evidence" value="ECO:0007669"/>
    <property type="project" value="InterPro"/>
</dbReference>
<dbReference type="GO" id="GO:0006412">
    <property type="term" value="P:translation"/>
    <property type="evidence" value="ECO:0007669"/>
    <property type="project" value="UniProtKB-UniRule"/>
</dbReference>
<dbReference type="Gene3D" id="4.10.830.30">
    <property type="entry name" value="Ribosomal protein L31"/>
    <property type="match status" value="1"/>
</dbReference>
<dbReference type="HAMAP" id="MF_00502">
    <property type="entry name" value="Ribosomal_bL31_2"/>
    <property type="match status" value="1"/>
</dbReference>
<dbReference type="InterPro" id="IPR034704">
    <property type="entry name" value="Ribosomal_bL28/bL31-like_sf"/>
</dbReference>
<dbReference type="InterPro" id="IPR002150">
    <property type="entry name" value="Ribosomal_bL31"/>
</dbReference>
<dbReference type="InterPro" id="IPR027493">
    <property type="entry name" value="Ribosomal_bL31_B"/>
</dbReference>
<dbReference type="InterPro" id="IPR042105">
    <property type="entry name" value="Ribosomal_bL31_sf"/>
</dbReference>
<dbReference type="NCBIfam" id="TIGR00105">
    <property type="entry name" value="L31"/>
    <property type="match status" value="1"/>
</dbReference>
<dbReference type="NCBIfam" id="NF002462">
    <property type="entry name" value="PRK01678.1"/>
    <property type="match status" value="1"/>
</dbReference>
<dbReference type="PANTHER" id="PTHR33280">
    <property type="entry name" value="50S RIBOSOMAL PROTEIN L31, CHLOROPLASTIC"/>
    <property type="match status" value="1"/>
</dbReference>
<dbReference type="PANTHER" id="PTHR33280:SF1">
    <property type="entry name" value="LARGE RIBOSOMAL SUBUNIT PROTEIN BL31C"/>
    <property type="match status" value="1"/>
</dbReference>
<dbReference type="Pfam" id="PF01197">
    <property type="entry name" value="Ribosomal_L31"/>
    <property type="match status" value="1"/>
</dbReference>
<dbReference type="PRINTS" id="PR01249">
    <property type="entry name" value="RIBOSOMALL31"/>
</dbReference>
<dbReference type="SUPFAM" id="SSF143800">
    <property type="entry name" value="L28p-like"/>
    <property type="match status" value="1"/>
</dbReference>
<dbReference type="PROSITE" id="PS01143">
    <property type="entry name" value="RIBOSOMAL_L31"/>
    <property type="match status" value="1"/>
</dbReference>
<evidence type="ECO:0000255" key="1">
    <source>
        <dbReference type="HAMAP-Rule" id="MF_00502"/>
    </source>
</evidence>
<evidence type="ECO:0000305" key="2"/>
<proteinExistence type="inferred from homology"/>
<feature type="chain" id="PRO_0000173283" description="Large ribosomal subunit protein bL31B">
    <location>
        <begin position="1"/>
        <end position="86"/>
    </location>
</feature>
<name>RL31B_VIBVY</name>
<sequence>MKPGIHPEYRKVVFHDTSVDHYFVVGSTLQTDRTIEWEDGQTYPYFTIEVSSESHPFYTGKQRVVQKEGRVANFNRRFAQFGSKEG</sequence>